<name>OTC_CUPMC</name>
<reference key="1">
    <citation type="journal article" date="2010" name="PLoS ONE">
        <title>The complete genome sequence of Cupriavidus metallidurans strain CH34, a master survivalist in harsh and anthropogenic environments.</title>
        <authorList>
            <person name="Janssen P.J."/>
            <person name="Van Houdt R."/>
            <person name="Moors H."/>
            <person name="Monsieurs P."/>
            <person name="Morin N."/>
            <person name="Michaux A."/>
            <person name="Benotmane M.A."/>
            <person name="Leys N."/>
            <person name="Vallaeys T."/>
            <person name="Lapidus A."/>
            <person name="Monchy S."/>
            <person name="Medigue C."/>
            <person name="Taghavi S."/>
            <person name="McCorkle S."/>
            <person name="Dunn J."/>
            <person name="van der Lelie D."/>
            <person name="Mergeay M."/>
        </authorList>
    </citation>
    <scope>NUCLEOTIDE SEQUENCE [LARGE SCALE GENOMIC DNA]</scope>
    <source>
        <strain>ATCC 43123 / DSM 2839 / NBRC 102507 / CH34</strain>
    </source>
</reference>
<keyword id="KW-0028">Amino-acid biosynthesis</keyword>
<keyword id="KW-0055">Arginine biosynthesis</keyword>
<keyword id="KW-0963">Cytoplasm</keyword>
<keyword id="KW-1185">Reference proteome</keyword>
<keyword id="KW-0808">Transferase</keyword>
<comment type="function">
    <text evidence="1">Reversibly catalyzes the transfer of the carbamoyl group from carbamoyl phosphate (CP) to the N(epsilon) atom of ornithine (ORN) to produce L-citrulline.</text>
</comment>
<comment type="catalytic activity">
    <reaction evidence="2">
        <text>carbamoyl phosphate + L-ornithine = L-citrulline + phosphate + H(+)</text>
        <dbReference type="Rhea" id="RHEA:19513"/>
        <dbReference type="ChEBI" id="CHEBI:15378"/>
        <dbReference type="ChEBI" id="CHEBI:43474"/>
        <dbReference type="ChEBI" id="CHEBI:46911"/>
        <dbReference type="ChEBI" id="CHEBI:57743"/>
        <dbReference type="ChEBI" id="CHEBI:58228"/>
        <dbReference type="EC" id="2.1.3.3"/>
    </reaction>
</comment>
<comment type="pathway">
    <text evidence="2">Amino-acid biosynthesis; L-arginine biosynthesis; L-arginine from L-ornithine and carbamoyl phosphate: step 1/3.</text>
</comment>
<comment type="subcellular location">
    <subcellularLocation>
        <location evidence="2">Cytoplasm</location>
    </subcellularLocation>
</comment>
<comment type="similarity">
    <text evidence="2">Belongs to the aspartate/ornithine carbamoyltransferase superfamily. OTCase family.</text>
</comment>
<evidence type="ECO:0000250" key="1"/>
<evidence type="ECO:0000255" key="2">
    <source>
        <dbReference type="HAMAP-Rule" id="MF_01109"/>
    </source>
</evidence>
<protein>
    <recommendedName>
        <fullName evidence="2">Ornithine carbamoyltransferase</fullName>
        <shortName evidence="2">OTCase</shortName>
        <ecNumber evidence="2">2.1.3.3</ecNumber>
    </recommendedName>
</protein>
<sequence length="307" mass="35015">MSPTPIKHYLQFSDLSADEYEYLLDRARILKAKFKNYETWHPLHDRTLAMIFEKNSTRTRLSFEAGIHQLGGHAVFLNTRDSQLGRGEPIEDAAQVISRMVDIIMIRTFGQEIIDRFAKHSRVPVINGLTNEYHPCQVLADVFTYIEQRGTIAGKTVAWIGDANNMAYTWIQAAERLDFTFHFSAPPGYQLDPAMVPDWAASRVKVFDNPLDACQGAHLVTTDVWTSMGFEAENDARKRAFKDWMVTTAMMDRAADDALFMHCLPAHRGEEVEAAVIDGPRSVVWEEAENRLHVQKALMEYLLCGRY</sequence>
<organism>
    <name type="scientific">Cupriavidus metallidurans (strain ATCC 43123 / DSM 2839 / NBRC 102507 / CH34)</name>
    <name type="common">Ralstonia metallidurans</name>
    <dbReference type="NCBI Taxonomy" id="266264"/>
    <lineage>
        <taxon>Bacteria</taxon>
        <taxon>Pseudomonadati</taxon>
        <taxon>Pseudomonadota</taxon>
        <taxon>Betaproteobacteria</taxon>
        <taxon>Burkholderiales</taxon>
        <taxon>Burkholderiaceae</taxon>
        <taxon>Cupriavidus</taxon>
    </lineage>
</organism>
<feature type="chain" id="PRO_1000065114" description="Ornithine carbamoyltransferase">
    <location>
        <begin position="1"/>
        <end position="307"/>
    </location>
</feature>
<feature type="binding site" evidence="2">
    <location>
        <begin position="56"/>
        <end position="59"/>
    </location>
    <ligand>
        <name>carbamoyl phosphate</name>
        <dbReference type="ChEBI" id="CHEBI:58228"/>
    </ligand>
</feature>
<feature type="binding site" evidence="2">
    <location>
        <position position="83"/>
    </location>
    <ligand>
        <name>carbamoyl phosphate</name>
        <dbReference type="ChEBI" id="CHEBI:58228"/>
    </ligand>
</feature>
<feature type="binding site" evidence="2">
    <location>
        <position position="107"/>
    </location>
    <ligand>
        <name>carbamoyl phosphate</name>
        <dbReference type="ChEBI" id="CHEBI:58228"/>
    </ligand>
</feature>
<feature type="binding site" evidence="2">
    <location>
        <begin position="134"/>
        <end position="137"/>
    </location>
    <ligand>
        <name>carbamoyl phosphate</name>
        <dbReference type="ChEBI" id="CHEBI:58228"/>
    </ligand>
</feature>
<feature type="binding site" evidence="2">
    <location>
        <position position="165"/>
    </location>
    <ligand>
        <name>L-ornithine</name>
        <dbReference type="ChEBI" id="CHEBI:46911"/>
    </ligand>
</feature>
<feature type="binding site" evidence="2">
    <location>
        <position position="223"/>
    </location>
    <ligand>
        <name>L-ornithine</name>
        <dbReference type="ChEBI" id="CHEBI:46911"/>
    </ligand>
</feature>
<feature type="binding site" evidence="2">
    <location>
        <begin position="227"/>
        <end position="228"/>
    </location>
    <ligand>
        <name>L-ornithine</name>
        <dbReference type="ChEBI" id="CHEBI:46911"/>
    </ligand>
</feature>
<feature type="binding site" evidence="2">
    <location>
        <begin position="263"/>
        <end position="264"/>
    </location>
    <ligand>
        <name>carbamoyl phosphate</name>
        <dbReference type="ChEBI" id="CHEBI:58228"/>
    </ligand>
</feature>
<feature type="binding site" evidence="2">
    <location>
        <position position="291"/>
    </location>
    <ligand>
        <name>carbamoyl phosphate</name>
        <dbReference type="ChEBI" id="CHEBI:58228"/>
    </ligand>
</feature>
<gene>
    <name evidence="2" type="primary">argF</name>
    <name type="ordered locus">Rmet_2902</name>
</gene>
<accession>Q1LJA1</accession>
<dbReference type="EC" id="2.1.3.3" evidence="2"/>
<dbReference type="EMBL" id="CP000352">
    <property type="protein sequence ID" value="ABF09775.1"/>
    <property type="molecule type" value="Genomic_DNA"/>
</dbReference>
<dbReference type="RefSeq" id="WP_011517450.1">
    <property type="nucleotide sequence ID" value="NC_007973.1"/>
</dbReference>
<dbReference type="SMR" id="Q1LJA1"/>
<dbReference type="STRING" id="266264.Rmet_2902"/>
<dbReference type="KEGG" id="rme:Rmet_2902"/>
<dbReference type="eggNOG" id="COG0078">
    <property type="taxonomic scope" value="Bacteria"/>
</dbReference>
<dbReference type="HOGENOM" id="CLU_043846_3_2_4"/>
<dbReference type="UniPathway" id="UPA00068">
    <property type="reaction ID" value="UER00112"/>
</dbReference>
<dbReference type="Proteomes" id="UP000002429">
    <property type="component" value="Chromosome"/>
</dbReference>
<dbReference type="GO" id="GO:0005737">
    <property type="term" value="C:cytoplasm"/>
    <property type="evidence" value="ECO:0007669"/>
    <property type="project" value="UniProtKB-SubCell"/>
</dbReference>
<dbReference type="GO" id="GO:0016597">
    <property type="term" value="F:amino acid binding"/>
    <property type="evidence" value="ECO:0007669"/>
    <property type="project" value="InterPro"/>
</dbReference>
<dbReference type="GO" id="GO:0004585">
    <property type="term" value="F:ornithine carbamoyltransferase activity"/>
    <property type="evidence" value="ECO:0007669"/>
    <property type="project" value="UniProtKB-UniRule"/>
</dbReference>
<dbReference type="GO" id="GO:0042450">
    <property type="term" value="P:arginine biosynthetic process via ornithine"/>
    <property type="evidence" value="ECO:0007669"/>
    <property type="project" value="TreeGrafter"/>
</dbReference>
<dbReference type="GO" id="GO:0019240">
    <property type="term" value="P:citrulline biosynthetic process"/>
    <property type="evidence" value="ECO:0007669"/>
    <property type="project" value="TreeGrafter"/>
</dbReference>
<dbReference type="GO" id="GO:0006526">
    <property type="term" value="P:L-arginine biosynthetic process"/>
    <property type="evidence" value="ECO:0007669"/>
    <property type="project" value="UniProtKB-UniRule"/>
</dbReference>
<dbReference type="FunFam" id="3.40.50.1370:FF:000008">
    <property type="entry name" value="Ornithine carbamoyltransferase"/>
    <property type="match status" value="1"/>
</dbReference>
<dbReference type="Gene3D" id="3.40.50.1370">
    <property type="entry name" value="Aspartate/ornithine carbamoyltransferase"/>
    <property type="match status" value="2"/>
</dbReference>
<dbReference type="HAMAP" id="MF_01109">
    <property type="entry name" value="OTCase"/>
    <property type="match status" value="1"/>
</dbReference>
<dbReference type="InterPro" id="IPR006132">
    <property type="entry name" value="Asp/Orn_carbamoyltranf_P-bd"/>
</dbReference>
<dbReference type="InterPro" id="IPR006130">
    <property type="entry name" value="Asp/Orn_carbamoylTrfase"/>
</dbReference>
<dbReference type="InterPro" id="IPR036901">
    <property type="entry name" value="Asp/Orn_carbamoylTrfase_sf"/>
</dbReference>
<dbReference type="InterPro" id="IPR006131">
    <property type="entry name" value="Asp_carbamoyltransf_Asp/Orn-bd"/>
</dbReference>
<dbReference type="InterPro" id="IPR002292">
    <property type="entry name" value="Orn/put_carbamltrans"/>
</dbReference>
<dbReference type="InterPro" id="IPR024904">
    <property type="entry name" value="OTCase_ArgI"/>
</dbReference>
<dbReference type="NCBIfam" id="TIGR00658">
    <property type="entry name" value="orni_carb_tr"/>
    <property type="match status" value="1"/>
</dbReference>
<dbReference type="NCBIfam" id="NF001986">
    <property type="entry name" value="PRK00779.1"/>
    <property type="match status" value="1"/>
</dbReference>
<dbReference type="PANTHER" id="PTHR45753">
    <property type="entry name" value="ORNITHINE CARBAMOYLTRANSFERASE, MITOCHONDRIAL"/>
    <property type="match status" value="1"/>
</dbReference>
<dbReference type="PANTHER" id="PTHR45753:SF3">
    <property type="entry name" value="ORNITHINE TRANSCARBAMYLASE, MITOCHONDRIAL"/>
    <property type="match status" value="1"/>
</dbReference>
<dbReference type="Pfam" id="PF00185">
    <property type="entry name" value="OTCace"/>
    <property type="match status" value="1"/>
</dbReference>
<dbReference type="Pfam" id="PF02729">
    <property type="entry name" value="OTCace_N"/>
    <property type="match status" value="1"/>
</dbReference>
<dbReference type="PRINTS" id="PR00100">
    <property type="entry name" value="AOTCASE"/>
</dbReference>
<dbReference type="PRINTS" id="PR00102">
    <property type="entry name" value="OTCASE"/>
</dbReference>
<dbReference type="SUPFAM" id="SSF53671">
    <property type="entry name" value="Aspartate/ornithine carbamoyltransferase"/>
    <property type="match status" value="1"/>
</dbReference>
<dbReference type="PROSITE" id="PS00097">
    <property type="entry name" value="CARBAMOYLTRANSFERASE"/>
    <property type="match status" value="1"/>
</dbReference>
<proteinExistence type="inferred from homology"/>